<gene>
    <name type="primary">SLC7A5P2</name>
    <name type="synonym">IMAA</name>
    <name type="synonym">MMAA</name>
</gene>
<comment type="subcellular location">
    <subcellularLocation>
        <location evidence="4">Membrane</location>
        <topology evidence="4">Multi-pass membrane protein</topology>
    </subcellularLocation>
</comment>
<comment type="alternative products">
    <event type="alternative splicing"/>
    <isoform>
        <id>Q9GIP4-3</id>
        <name>1</name>
        <sequence type="displayed"/>
    </isoform>
    <isoform>
        <id>Q9GIP4-1</id>
        <name>2</name>
        <sequence type="described" ref="VSP_040419"/>
    </isoform>
</comment>
<comment type="tissue specificity">
    <text evidence="2">Expressed in peripheral blood mononuclear cells and lymphoid and myeloid cell lines.</text>
</comment>
<comment type="induction">
    <text evidence="2">Up-regulated by concanavalin-A stimulation.</text>
</comment>
<comment type="similarity">
    <text evidence="4">Belongs to the amino acid-polyamine-organocation (APC) superfamily. L-type amino acid transporter (LAT) (TC 2.A.3.8) family.</text>
</comment>
<comment type="caution">
    <text evidence="4">Could be the product of a pseudogene.</text>
</comment>
<name>LAT1L_HUMAN</name>
<evidence type="ECO:0000255" key="1"/>
<evidence type="ECO:0000269" key="2">
    <source>
    </source>
</evidence>
<evidence type="ECO:0000303" key="3">
    <source>
    </source>
</evidence>
<evidence type="ECO:0000305" key="4"/>
<sequence length="190" mass="19840">MAGAGPKRRALAAPVAEEKEEAREKMMAAKRADGAAPAGEGEGVTLQGNITLLKGVAVIVVAIMSSGIFVTPTGVLKEAGSPGLALVVWAACGVFSIVGALCYAELGTTISKSGGDYAYMLDVYGSLPAFLKLWIELLIIRPSSQYIVALVFATYLLKPLFPTCPVPEEAAKLVACHSVQLIVHQPTQVI</sequence>
<organism>
    <name type="scientific">Homo sapiens</name>
    <name type="common">Human</name>
    <dbReference type="NCBI Taxonomy" id="9606"/>
    <lineage>
        <taxon>Eukaryota</taxon>
        <taxon>Metazoa</taxon>
        <taxon>Chordata</taxon>
        <taxon>Craniata</taxon>
        <taxon>Vertebrata</taxon>
        <taxon>Euteleostomi</taxon>
        <taxon>Mammalia</taxon>
        <taxon>Eutheria</taxon>
        <taxon>Euarchontoglires</taxon>
        <taxon>Primates</taxon>
        <taxon>Haplorrhini</taxon>
        <taxon>Catarrhini</taxon>
        <taxon>Hominidae</taxon>
        <taxon>Homo</taxon>
    </lineage>
</organism>
<keyword id="KW-0025">Alternative splicing</keyword>
<keyword id="KW-0472">Membrane</keyword>
<keyword id="KW-1185">Reference proteome</keyword>
<keyword id="KW-0812">Transmembrane</keyword>
<keyword id="KW-1133">Transmembrane helix</keyword>
<feature type="chain" id="PRO_0000348250" description="Putative L-type amino acid transporter 1-like protein IMAA">
    <location>
        <begin position="1"/>
        <end position="190"/>
    </location>
</feature>
<feature type="transmembrane region" description="Helical" evidence="1">
    <location>
        <begin position="56"/>
        <end position="76"/>
    </location>
</feature>
<feature type="transmembrane region" description="Helical" evidence="1">
    <location>
        <begin position="84"/>
        <end position="104"/>
    </location>
</feature>
<feature type="transmembrane region" description="Helical" evidence="1">
    <location>
        <begin position="133"/>
        <end position="157"/>
    </location>
</feature>
<feature type="splice variant" id="VSP_040419" description="In isoform 2." evidence="3">
    <original>QLIVHQPTQVI</original>
    <variation>H</variation>
    <location>
        <begin position="180"/>
        <end position="190"/>
    </location>
</feature>
<feature type="sequence conflict" description="In Ref. 1; BAB20039/BAB97211." evidence="4" ref="1">
    <original>M</original>
    <variation>I</variation>
    <location>
        <position position="26"/>
    </location>
</feature>
<feature type="sequence conflict" description="In Ref. 1; BAB20039/BAB97211/BAB97213." evidence="4" ref="1">
    <original>S</original>
    <variation>G</variation>
    <location>
        <position position="65"/>
    </location>
</feature>
<protein>
    <recommendedName>
        <fullName>Putative L-type amino acid transporter 1-like protein IMAA</fullName>
    </recommendedName>
    <alternativeName>
        <fullName>hLAT1 3-transmembrane protein IMAA</fullName>
        <shortName>hLAT1 3TM IMAA</shortName>
    </alternativeName>
    <alternativeName>
        <fullName>hLAT1 3-transmembrane protein MMAA</fullName>
        <shortName>hLAT1 3TM MMAA</shortName>
    </alternativeName>
</protein>
<accession>Q9GIP4</accession>
<accession>Q6IPZ0</accession>
<accession>Q8MH62</accession>
<reference key="1">
    <citation type="journal article" date="2002" name="Int. J. Biochem. Cell Biol.">
        <title>Up-regulated expression of a novel gene in activated human peripheral blood mononuclear cells that is a truncated paralog of the human system L-amino acid transporter 1.</title>
        <authorList>
            <person name="Ito M."/>
            <person name="Takebayashi S."/>
            <person name="Okumura K."/>
            <person name="Ohkubo T."/>
            <person name="Nishio M."/>
            <person name="Kawano M."/>
            <person name="Komada H."/>
            <person name="Ito Y."/>
            <person name="Tsurudome M."/>
        </authorList>
    </citation>
    <scope>NUCLEOTIDE SEQUENCE [MRNA] (ISOFORMS 1 AND 2)</scope>
    <scope>INDUCTION</scope>
    <scope>TISSUE SPECIFICITY</scope>
    <source>
        <tissue>Cervix carcinoma</tissue>
    </source>
</reference>
<reference key="2">
    <citation type="journal article" date="2004" name="Nature">
        <title>The sequence and analysis of duplication-rich human chromosome 16.</title>
        <authorList>
            <person name="Martin J."/>
            <person name="Han C."/>
            <person name="Gordon L.A."/>
            <person name="Terry A."/>
            <person name="Prabhakar S."/>
            <person name="She X."/>
            <person name="Xie G."/>
            <person name="Hellsten U."/>
            <person name="Chan Y.M."/>
            <person name="Altherr M."/>
            <person name="Couronne O."/>
            <person name="Aerts A."/>
            <person name="Bajorek E."/>
            <person name="Black S."/>
            <person name="Blumer H."/>
            <person name="Branscomb E."/>
            <person name="Brown N.C."/>
            <person name="Bruno W.J."/>
            <person name="Buckingham J.M."/>
            <person name="Callen D.F."/>
            <person name="Campbell C.S."/>
            <person name="Campbell M.L."/>
            <person name="Campbell E.W."/>
            <person name="Caoile C."/>
            <person name="Challacombe J.F."/>
            <person name="Chasteen L.A."/>
            <person name="Chertkov O."/>
            <person name="Chi H.C."/>
            <person name="Christensen M."/>
            <person name="Clark L.M."/>
            <person name="Cohn J.D."/>
            <person name="Denys M."/>
            <person name="Detter J.C."/>
            <person name="Dickson M."/>
            <person name="Dimitrijevic-Bussod M."/>
            <person name="Escobar J."/>
            <person name="Fawcett J.J."/>
            <person name="Flowers D."/>
            <person name="Fotopulos D."/>
            <person name="Glavina T."/>
            <person name="Gomez M."/>
            <person name="Gonzales E."/>
            <person name="Goodstein D."/>
            <person name="Goodwin L.A."/>
            <person name="Grady D.L."/>
            <person name="Grigoriev I."/>
            <person name="Groza M."/>
            <person name="Hammon N."/>
            <person name="Hawkins T."/>
            <person name="Haydu L."/>
            <person name="Hildebrand C.E."/>
            <person name="Huang W."/>
            <person name="Israni S."/>
            <person name="Jett J."/>
            <person name="Jewett P.B."/>
            <person name="Kadner K."/>
            <person name="Kimball H."/>
            <person name="Kobayashi A."/>
            <person name="Krawczyk M.-C."/>
            <person name="Leyba T."/>
            <person name="Longmire J.L."/>
            <person name="Lopez F."/>
            <person name="Lou Y."/>
            <person name="Lowry S."/>
            <person name="Ludeman T."/>
            <person name="Manohar C.F."/>
            <person name="Mark G.A."/>
            <person name="McMurray K.L."/>
            <person name="Meincke L.J."/>
            <person name="Morgan J."/>
            <person name="Moyzis R.K."/>
            <person name="Mundt M.O."/>
            <person name="Munk A.C."/>
            <person name="Nandkeshwar R.D."/>
            <person name="Pitluck S."/>
            <person name="Pollard M."/>
            <person name="Predki P."/>
            <person name="Parson-Quintana B."/>
            <person name="Ramirez L."/>
            <person name="Rash S."/>
            <person name="Retterer J."/>
            <person name="Ricke D.O."/>
            <person name="Robinson D.L."/>
            <person name="Rodriguez A."/>
            <person name="Salamov A."/>
            <person name="Saunders E.H."/>
            <person name="Scott D."/>
            <person name="Shough T."/>
            <person name="Stallings R.L."/>
            <person name="Stalvey M."/>
            <person name="Sutherland R.D."/>
            <person name="Tapia R."/>
            <person name="Tesmer J.G."/>
            <person name="Thayer N."/>
            <person name="Thompson L.S."/>
            <person name="Tice H."/>
            <person name="Torney D.C."/>
            <person name="Tran-Gyamfi M."/>
            <person name="Tsai M."/>
            <person name="Ulanovsky L.E."/>
            <person name="Ustaszewska A."/>
            <person name="Vo N."/>
            <person name="White P.S."/>
            <person name="Williams A.L."/>
            <person name="Wills P.L."/>
            <person name="Wu J.-R."/>
            <person name="Wu K."/>
            <person name="Yang J."/>
            <person name="DeJong P."/>
            <person name="Bruce D."/>
            <person name="Doggett N.A."/>
            <person name="Deaven L."/>
            <person name="Schmutz J."/>
            <person name="Grimwood J."/>
            <person name="Richardson P."/>
            <person name="Rokhsar D.S."/>
            <person name="Eichler E.E."/>
            <person name="Gilna P."/>
            <person name="Lucas S.M."/>
            <person name="Myers R.M."/>
            <person name="Rubin E.M."/>
            <person name="Pennacchio L.A."/>
        </authorList>
    </citation>
    <scope>NUCLEOTIDE SEQUENCE [LARGE SCALE GENOMIC DNA]</scope>
</reference>
<proteinExistence type="uncertain"/>
<dbReference type="EMBL" id="AB040413">
    <property type="protein sequence ID" value="BAB20039.1"/>
    <property type="molecule type" value="mRNA"/>
</dbReference>
<dbReference type="EMBL" id="AB055225">
    <property type="protein sequence ID" value="BAB97211.1"/>
    <property type="molecule type" value="mRNA"/>
</dbReference>
<dbReference type="EMBL" id="AB055227">
    <property type="protein sequence ID" value="BAB97213.1"/>
    <property type="molecule type" value="mRNA"/>
</dbReference>
<dbReference type="EMBL" id="AC005632">
    <property type="status" value="NOT_ANNOTATED_CDS"/>
    <property type="molecule type" value="Genomic_DNA"/>
</dbReference>
<dbReference type="SMR" id="Q9GIP4"/>
<dbReference type="GlyGen" id="Q9GIP4">
    <property type="glycosylation" value="1 site"/>
</dbReference>
<dbReference type="iPTMnet" id="Q9GIP4"/>
<dbReference type="PhosphoSitePlus" id="Q9GIP4"/>
<dbReference type="SwissPalm" id="Q9GIP4"/>
<dbReference type="BioMuta" id="HGNC:24951"/>
<dbReference type="DMDM" id="317373378"/>
<dbReference type="jPOST" id="Q9GIP4"/>
<dbReference type="MassIVE" id="Q9GIP4"/>
<dbReference type="PeptideAtlas" id="Q9GIP4"/>
<dbReference type="ProteomicsDB" id="80076">
    <molecule id="Q9GIP4-3"/>
</dbReference>
<dbReference type="ProteomicsDB" id="80077">
    <molecule id="Q9GIP4-1"/>
</dbReference>
<dbReference type="TopDownProteomics" id="Q9GIP4-3">
    <molecule id="Q9GIP4-3"/>
</dbReference>
<dbReference type="AGR" id="HGNC:24951"/>
<dbReference type="GeneCards" id="SLC7A5P2"/>
<dbReference type="HGNC" id="HGNC:24951">
    <property type="gene designation" value="SLC7A5P2"/>
</dbReference>
<dbReference type="neXtProt" id="NX_Q9GIP4"/>
<dbReference type="InParanoid" id="Q9GIP4"/>
<dbReference type="PAN-GO" id="Q9GIP4">
    <property type="GO annotations" value="2 GO annotations based on evolutionary models"/>
</dbReference>
<dbReference type="PhylomeDB" id="Q9GIP4"/>
<dbReference type="PathwayCommons" id="Q9GIP4"/>
<dbReference type="ChiTaRS" id="SLC7A5P2">
    <property type="organism name" value="human"/>
</dbReference>
<dbReference type="Pharos" id="Q9GIP4">
    <property type="development level" value="Tdark"/>
</dbReference>
<dbReference type="Proteomes" id="UP000005640">
    <property type="component" value="Unplaced"/>
</dbReference>
<dbReference type="RNAct" id="Q9GIP4">
    <property type="molecule type" value="protein"/>
</dbReference>
<dbReference type="GO" id="GO:0016020">
    <property type="term" value="C:membrane"/>
    <property type="evidence" value="ECO:0007669"/>
    <property type="project" value="UniProtKB-SubCell"/>
</dbReference>
<dbReference type="GO" id="GO:0022857">
    <property type="term" value="F:transmembrane transporter activity"/>
    <property type="evidence" value="ECO:0007669"/>
    <property type="project" value="InterPro"/>
</dbReference>
<dbReference type="GO" id="GO:1902475">
    <property type="term" value="P:L-alpha-amino acid transmembrane transport"/>
    <property type="evidence" value="ECO:0007669"/>
    <property type="project" value="UniProtKB-ARBA"/>
</dbReference>
<dbReference type="FunFam" id="1.20.1740.10:FF:000092">
    <property type="entry name" value="Putative L-type amino acid transporter 1-like protein MLAS"/>
    <property type="match status" value="1"/>
</dbReference>
<dbReference type="Gene3D" id="1.20.1740.10">
    <property type="entry name" value="Amino acid/polyamine transporter I"/>
    <property type="match status" value="1"/>
</dbReference>
<dbReference type="InterPro" id="IPR002293">
    <property type="entry name" value="AA/rel_permease1"/>
</dbReference>
<dbReference type="InterPro" id="IPR050598">
    <property type="entry name" value="AminoAcid_Transporter"/>
</dbReference>
<dbReference type="PANTHER" id="PTHR11785">
    <property type="entry name" value="AMINO ACID TRANSPORTER"/>
    <property type="match status" value="1"/>
</dbReference>
<dbReference type="PANTHER" id="PTHR11785:SF315">
    <property type="entry name" value="LARGE NEUTRAL AMINO ACIDS TRANSPORTER SMALL SUBUNIT 1"/>
    <property type="match status" value="1"/>
</dbReference>
<dbReference type="Pfam" id="PF13520">
    <property type="entry name" value="AA_permease_2"/>
    <property type="match status" value="1"/>
</dbReference>